<keyword id="KW-0963">Cytoplasm</keyword>
<keyword id="KW-0255">Endonuclease</keyword>
<keyword id="KW-0378">Hydrolase</keyword>
<keyword id="KW-0540">Nuclease</keyword>
<keyword id="KW-0819">tRNA processing</keyword>
<sequence length="232" mass="26514">MLEGIIDINHIFDEEGIKTLKRFGWDGSVAVQNHNEYSEEIINSTVEYGEKHDFKVFSGVKISTKNQNEMEKAIKKYRNKVDILLVEGGDIKINRRVLEMNDVDILSTPELNRMDNGLDHILARLGSTNRVAIELNFGNLLKSRNYDRSKILWAFQRNLKLAKKYDTPVVISSGASDIYGIKAPGDLRGFLNTITDPLYSKKIMETTSKIIDYRLYLKKDTVLTLGIEIVEE</sequence>
<feature type="chain" id="PRO_1000194591" description="Ribonuclease P protein component 3">
    <location>
        <begin position="1"/>
        <end position="232"/>
    </location>
</feature>
<evidence type="ECO:0000255" key="1">
    <source>
        <dbReference type="HAMAP-Rule" id="MF_00756"/>
    </source>
</evidence>
<dbReference type="EC" id="3.1.26.5" evidence="1"/>
<dbReference type="EMBL" id="CP000867">
    <property type="protein sequence ID" value="ABX01299.1"/>
    <property type="molecule type" value="Genomic_DNA"/>
</dbReference>
<dbReference type="SMR" id="A9A6K3"/>
<dbReference type="STRING" id="444158.MmarC6_0481"/>
<dbReference type="KEGG" id="mmx:MmarC6_0481"/>
<dbReference type="eggNOG" id="arCOG00307">
    <property type="taxonomic scope" value="Archaea"/>
</dbReference>
<dbReference type="HOGENOM" id="CLU_074509_0_0_2"/>
<dbReference type="OrthoDB" id="85765at2157"/>
<dbReference type="PhylomeDB" id="A9A6K3"/>
<dbReference type="GO" id="GO:0005737">
    <property type="term" value="C:cytoplasm"/>
    <property type="evidence" value="ECO:0007669"/>
    <property type="project" value="UniProtKB-SubCell"/>
</dbReference>
<dbReference type="GO" id="GO:0030677">
    <property type="term" value="C:ribonuclease P complex"/>
    <property type="evidence" value="ECO:0007669"/>
    <property type="project" value="UniProtKB-UniRule"/>
</dbReference>
<dbReference type="GO" id="GO:0004526">
    <property type="term" value="F:ribonuclease P activity"/>
    <property type="evidence" value="ECO:0007669"/>
    <property type="project" value="UniProtKB-UniRule"/>
</dbReference>
<dbReference type="GO" id="GO:0001682">
    <property type="term" value="P:tRNA 5'-leader removal"/>
    <property type="evidence" value="ECO:0007669"/>
    <property type="project" value="UniProtKB-UniRule"/>
</dbReference>
<dbReference type="FunFam" id="3.20.20.140:FF:000196">
    <property type="entry name" value="Ribonuclease P protein component 3"/>
    <property type="match status" value="1"/>
</dbReference>
<dbReference type="Gene3D" id="3.20.20.140">
    <property type="entry name" value="Metal-dependent hydrolases"/>
    <property type="match status" value="1"/>
</dbReference>
<dbReference type="HAMAP" id="MF_00756">
    <property type="entry name" value="RNase_P_3"/>
    <property type="match status" value="1"/>
</dbReference>
<dbReference type="InterPro" id="IPR016195">
    <property type="entry name" value="Pol/histidinol_Pase-like"/>
</dbReference>
<dbReference type="InterPro" id="IPR023539">
    <property type="entry name" value="RNase_P_comp-3_arc"/>
</dbReference>
<dbReference type="InterPro" id="IPR002738">
    <property type="entry name" value="RNase_P_p30"/>
</dbReference>
<dbReference type="NCBIfam" id="NF046108">
    <property type="entry name" value="RNaseP3Mthcoc"/>
    <property type="match status" value="1"/>
</dbReference>
<dbReference type="Pfam" id="PF01876">
    <property type="entry name" value="RNase_P_p30"/>
    <property type="match status" value="1"/>
</dbReference>
<dbReference type="SUPFAM" id="SSF89550">
    <property type="entry name" value="PHP domain-like"/>
    <property type="match status" value="1"/>
</dbReference>
<name>RNP3_METM6</name>
<comment type="function">
    <text evidence="1">Part of ribonuclease P, a protein complex that generates mature tRNA molecules by cleaving their 5'-ends.</text>
</comment>
<comment type="catalytic activity">
    <reaction evidence="1">
        <text>Endonucleolytic cleavage of RNA, removing 5'-extranucleotides from tRNA precursor.</text>
        <dbReference type="EC" id="3.1.26.5"/>
    </reaction>
</comment>
<comment type="subunit">
    <text evidence="1">Consists of a catalytic RNA component and at least 4-5 protein subunits.</text>
</comment>
<comment type="subcellular location">
    <subcellularLocation>
        <location evidence="1">Cytoplasm</location>
    </subcellularLocation>
</comment>
<comment type="similarity">
    <text evidence="1">Belongs to the eukaryotic/archaeal RNase P protein component 3 family.</text>
</comment>
<gene>
    <name evidence="1" type="primary">rnp3</name>
    <name type="ordered locus">MmarC6_0481</name>
</gene>
<proteinExistence type="inferred from homology"/>
<organism>
    <name type="scientific">Methanococcus maripaludis (strain C6 / ATCC BAA-1332)</name>
    <dbReference type="NCBI Taxonomy" id="444158"/>
    <lineage>
        <taxon>Archaea</taxon>
        <taxon>Methanobacteriati</taxon>
        <taxon>Methanobacteriota</taxon>
        <taxon>Methanomada group</taxon>
        <taxon>Methanococci</taxon>
        <taxon>Methanococcales</taxon>
        <taxon>Methanococcaceae</taxon>
        <taxon>Methanococcus</taxon>
    </lineage>
</organism>
<protein>
    <recommendedName>
        <fullName evidence="1">Ribonuclease P protein component 3</fullName>
        <shortName evidence="1">RNase P component 3</shortName>
        <ecNumber evidence="1">3.1.26.5</ecNumber>
    </recommendedName>
    <alternativeName>
        <fullName evidence="1">Rpp30</fullName>
    </alternativeName>
</protein>
<reference key="1">
    <citation type="submission" date="2007-10" db="EMBL/GenBank/DDBJ databases">
        <title>Complete sequence of Methanococcus maripaludis C6.</title>
        <authorList>
            <consortium name="US DOE Joint Genome Institute"/>
            <person name="Copeland A."/>
            <person name="Lucas S."/>
            <person name="Lapidus A."/>
            <person name="Barry K."/>
            <person name="Glavina del Rio T."/>
            <person name="Dalin E."/>
            <person name="Tice H."/>
            <person name="Pitluck S."/>
            <person name="Clum A."/>
            <person name="Schmutz J."/>
            <person name="Larimer F."/>
            <person name="Land M."/>
            <person name="Hauser L."/>
            <person name="Kyrpides N."/>
            <person name="Mikhailova N."/>
            <person name="Sieprawska-Lupa M."/>
            <person name="Whitman W.B."/>
            <person name="Richardson P."/>
        </authorList>
    </citation>
    <scope>NUCLEOTIDE SEQUENCE [LARGE SCALE GENOMIC DNA]</scope>
    <source>
        <strain>C6 / ATCC BAA-1332</strain>
    </source>
</reference>
<accession>A9A6K3</accession>